<organism>
    <name type="scientific">Rickettsia typhi (strain ATCC VR-144 / Wilmington)</name>
    <dbReference type="NCBI Taxonomy" id="257363"/>
    <lineage>
        <taxon>Bacteria</taxon>
        <taxon>Pseudomonadati</taxon>
        <taxon>Pseudomonadota</taxon>
        <taxon>Alphaproteobacteria</taxon>
        <taxon>Rickettsiales</taxon>
        <taxon>Rickettsiaceae</taxon>
        <taxon>Rickettsieae</taxon>
        <taxon>Rickettsia</taxon>
        <taxon>typhus group</taxon>
    </lineage>
</organism>
<feature type="chain" id="PRO_0000280984" description="Succinate dehydrogenase iron-sulfur subunit">
    <location>
        <begin position="1"/>
        <end position="261"/>
    </location>
</feature>
<feature type="domain" description="2Fe-2S ferredoxin-type" evidence="2">
    <location>
        <begin position="28"/>
        <end position="119"/>
    </location>
</feature>
<feature type="domain" description="4Fe-4S ferredoxin-type" evidence="3">
    <location>
        <begin position="161"/>
        <end position="191"/>
    </location>
</feature>
<feature type="binding site" evidence="1">
    <location>
        <position position="80"/>
    </location>
    <ligand>
        <name>[2Fe-2S] cluster</name>
        <dbReference type="ChEBI" id="CHEBI:190135"/>
    </ligand>
</feature>
<feature type="binding site" evidence="1">
    <location>
        <position position="85"/>
    </location>
    <ligand>
        <name>[2Fe-2S] cluster</name>
        <dbReference type="ChEBI" id="CHEBI:190135"/>
    </ligand>
</feature>
<feature type="binding site" evidence="1">
    <location>
        <position position="100"/>
    </location>
    <ligand>
        <name>[2Fe-2S] cluster</name>
        <dbReference type="ChEBI" id="CHEBI:190135"/>
    </ligand>
</feature>
<feature type="binding site" evidence="1">
    <location>
        <position position="171"/>
    </location>
    <ligand>
        <name>[4Fe-4S] cluster</name>
        <dbReference type="ChEBI" id="CHEBI:49883"/>
    </ligand>
</feature>
<feature type="binding site" evidence="1">
    <location>
        <position position="174"/>
    </location>
    <ligand>
        <name>[4Fe-4S] cluster</name>
        <dbReference type="ChEBI" id="CHEBI:49883"/>
    </ligand>
</feature>
<feature type="binding site" evidence="1">
    <location>
        <position position="177"/>
    </location>
    <ligand>
        <name>[4Fe-4S] cluster</name>
        <dbReference type="ChEBI" id="CHEBI:49883"/>
    </ligand>
</feature>
<feature type="binding site" evidence="1">
    <location>
        <position position="181"/>
    </location>
    <ligand>
        <name>[3Fe-4S] cluster</name>
        <dbReference type="ChEBI" id="CHEBI:21137"/>
    </ligand>
</feature>
<feature type="binding site" evidence="1">
    <location>
        <position position="186"/>
    </location>
    <ligand>
        <name>a ubiquinone</name>
        <dbReference type="ChEBI" id="CHEBI:16389"/>
        <note>ligand shared with SdhD subunit</note>
    </ligand>
</feature>
<feature type="binding site" evidence="1">
    <location>
        <position position="228"/>
    </location>
    <ligand>
        <name>[3Fe-4S] cluster</name>
        <dbReference type="ChEBI" id="CHEBI:21137"/>
    </ligand>
</feature>
<feature type="binding site" evidence="1">
    <location>
        <position position="234"/>
    </location>
    <ligand>
        <name>[3Fe-4S] cluster</name>
        <dbReference type="ChEBI" id="CHEBI:21137"/>
    </ligand>
</feature>
<feature type="binding site" evidence="1">
    <location>
        <position position="238"/>
    </location>
    <ligand>
        <name>[4Fe-4S] cluster</name>
        <dbReference type="ChEBI" id="CHEBI:49883"/>
    </ligand>
</feature>
<evidence type="ECO:0000250" key="1"/>
<evidence type="ECO:0000255" key="2">
    <source>
        <dbReference type="PROSITE-ProRule" id="PRU00465"/>
    </source>
</evidence>
<evidence type="ECO:0000255" key="3">
    <source>
        <dbReference type="PROSITE-ProRule" id="PRU00711"/>
    </source>
</evidence>
<evidence type="ECO:0000305" key="4"/>
<accession>Q68XS0</accession>
<name>SDHB_RICTY</name>
<sequence>MVELRLPSNSVVKKGRVHKAQQEMLKPRKVQVYRYDPDLNKNPTIDSFEIDLSKTGPMVLDALIKIKNEIDSTLTFRRSCREGICGSCAMNIDGTNTLACIKPIEDISGDIKIYPLPHMKVVKDLVPDMSHFYTQYESIEPWLKNDNPAPSNSERLQSIQDREKLDGLYECILCACCSTSCPSYWWNSDKYLGPAILLQAYRWIADSRDDNTGARLEALEDPFKLYRCHTIMNCTKTCPKGLNPAKAIGRVKSLIAERHGV</sequence>
<reference key="1">
    <citation type="journal article" date="2004" name="J. Bacteriol.">
        <title>Complete genome sequence of Rickettsia typhi and comparison with sequences of other Rickettsiae.</title>
        <authorList>
            <person name="McLeod M.P."/>
            <person name="Qin X."/>
            <person name="Karpathy S.E."/>
            <person name="Gioia J."/>
            <person name="Highlander S.K."/>
            <person name="Fox G.E."/>
            <person name="McNeill T.Z."/>
            <person name="Jiang H."/>
            <person name="Muzny D."/>
            <person name="Jacob L.S."/>
            <person name="Hawes A.C."/>
            <person name="Sodergren E."/>
            <person name="Gill R."/>
            <person name="Hume J."/>
            <person name="Morgan M."/>
            <person name="Fan G."/>
            <person name="Amin A.G."/>
            <person name="Gibbs R.A."/>
            <person name="Hong C."/>
            <person name="Yu X.-J."/>
            <person name="Walker D.H."/>
            <person name="Weinstock G.M."/>
        </authorList>
    </citation>
    <scope>NUCLEOTIDE SEQUENCE [LARGE SCALE GENOMIC DNA]</scope>
    <source>
        <strain>ATCC VR-144 / Wilmington</strain>
    </source>
</reference>
<protein>
    <recommendedName>
        <fullName>Succinate dehydrogenase iron-sulfur subunit</fullName>
        <ecNumber>1.3.5.1</ecNumber>
    </recommendedName>
</protein>
<keyword id="KW-0001">2Fe-2S</keyword>
<keyword id="KW-0003">3Fe-4S</keyword>
<keyword id="KW-0004">4Fe-4S</keyword>
<keyword id="KW-0249">Electron transport</keyword>
<keyword id="KW-0408">Iron</keyword>
<keyword id="KW-0411">Iron-sulfur</keyword>
<keyword id="KW-0479">Metal-binding</keyword>
<keyword id="KW-0560">Oxidoreductase</keyword>
<keyword id="KW-0813">Transport</keyword>
<keyword id="KW-0816">Tricarboxylic acid cycle</keyword>
<gene>
    <name type="primary">sdhB</name>
    <name type="ordered locus">RT0086</name>
</gene>
<comment type="catalytic activity">
    <reaction>
        <text>a quinone + succinate = fumarate + a quinol</text>
        <dbReference type="Rhea" id="RHEA:40523"/>
        <dbReference type="ChEBI" id="CHEBI:24646"/>
        <dbReference type="ChEBI" id="CHEBI:29806"/>
        <dbReference type="ChEBI" id="CHEBI:30031"/>
        <dbReference type="ChEBI" id="CHEBI:132124"/>
        <dbReference type="EC" id="1.3.5.1"/>
    </reaction>
</comment>
<comment type="cofactor">
    <cofactor>
        <name>[2Fe-2S] cluster</name>
        <dbReference type="ChEBI" id="CHEBI:190135"/>
    </cofactor>
    <text>Binds 1 [2Fe-2S] cluster.</text>
</comment>
<comment type="cofactor">
    <cofactor>
        <name>[3Fe-4S] cluster</name>
        <dbReference type="ChEBI" id="CHEBI:21137"/>
    </cofactor>
    <text>Binds 1 [3Fe-4S] cluster.</text>
</comment>
<comment type="cofactor">
    <cofactor>
        <name>[4Fe-4S] cluster</name>
        <dbReference type="ChEBI" id="CHEBI:49883"/>
    </cofactor>
    <text>Binds 1 [4Fe-4S] cluster.</text>
</comment>
<comment type="pathway">
    <text>Carbohydrate metabolism; tricarboxylic acid cycle; fumarate from succinate (bacterial route): step 1/1.</text>
</comment>
<comment type="subunit">
    <text>Part of an enzyme complex containing four subunits: a flavoprotein, an iron-sulfur, cytochrome b-556, and a hydrophobic anchor protein.</text>
</comment>
<comment type="similarity">
    <text evidence="4">Belongs to the succinate dehydrogenase/fumarate reductase iron-sulfur protein family.</text>
</comment>
<dbReference type="EC" id="1.3.5.1"/>
<dbReference type="EMBL" id="AE017197">
    <property type="protein sequence ID" value="AAU03572.1"/>
    <property type="molecule type" value="Genomic_DNA"/>
</dbReference>
<dbReference type="RefSeq" id="WP_011190559.1">
    <property type="nucleotide sequence ID" value="NC_006142.1"/>
</dbReference>
<dbReference type="SMR" id="Q68XS0"/>
<dbReference type="KEGG" id="rty:RT0086"/>
<dbReference type="eggNOG" id="COG0479">
    <property type="taxonomic scope" value="Bacteria"/>
</dbReference>
<dbReference type="HOGENOM" id="CLU_044838_0_2_5"/>
<dbReference type="OrthoDB" id="9804391at2"/>
<dbReference type="UniPathway" id="UPA00223">
    <property type="reaction ID" value="UER01005"/>
</dbReference>
<dbReference type="Proteomes" id="UP000000604">
    <property type="component" value="Chromosome"/>
</dbReference>
<dbReference type="GO" id="GO:0051537">
    <property type="term" value="F:2 iron, 2 sulfur cluster binding"/>
    <property type="evidence" value="ECO:0007669"/>
    <property type="project" value="UniProtKB-KW"/>
</dbReference>
<dbReference type="GO" id="GO:0051538">
    <property type="term" value="F:3 iron, 4 sulfur cluster binding"/>
    <property type="evidence" value="ECO:0007669"/>
    <property type="project" value="UniProtKB-KW"/>
</dbReference>
<dbReference type="GO" id="GO:0051539">
    <property type="term" value="F:4 iron, 4 sulfur cluster binding"/>
    <property type="evidence" value="ECO:0007669"/>
    <property type="project" value="UniProtKB-KW"/>
</dbReference>
<dbReference type="GO" id="GO:0009055">
    <property type="term" value="F:electron transfer activity"/>
    <property type="evidence" value="ECO:0007669"/>
    <property type="project" value="InterPro"/>
</dbReference>
<dbReference type="GO" id="GO:0046872">
    <property type="term" value="F:metal ion binding"/>
    <property type="evidence" value="ECO:0007669"/>
    <property type="project" value="UniProtKB-KW"/>
</dbReference>
<dbReference type="GO" id="GO:0008177">
    <property type="term" value="F:succinate dehydrogenase (quinone) activity"/>
    <property type="evidence" value="ECO:0007669"/>
    <property type="project" value="UniProtKB-EC"/>
</dbReference>
<dbReference type="GO" id="GO:0022904">
    <property type="term" value="P:respiratory electron transport chain"/>
    <property type="evidence" value="ECO:0007669"/>
    <property type="project" value="TreeGrafter"/>
</dbReference>
<dbReference type="GO" id="GO:0006099">
    <property type="term" value="P:tricarboxylic acid cycle"/>
    <property type="evidence" value="ECO:0007669"/>
    <property type="project" value="UniProtKB-UniPathway"/>
</dbReference>
<dbReference type="FunFam" id="3.10.20.30:FF:000007">
    <property type="entry name" value="Succinate dehydrogenase [ubiquinone] iron-sulfur subunit, mitochondrial"/>
    <property type="match status" value="1"/>
</dbReference>
<dbReference type="FunFam" id="1.10.1060.10:FF:000001">
    <property type="entry name" value="Succinate dehydrogenase iron-sulfur subunit SdhB"/>
    <property type="match status" value="1"/>
</dbReference>
<dbReference type="Gene3D" id="3.10.20.30">
    <property type="match status" value="1"/>
</dbReference>
<dbReference type="Gene3D" id="1.10.1060.10">
    <property type="entry name" value="Alpha-helical ferredoxin"/>
    <property type="match status" value="1"/>
</dbReference>
<dbReference type="InterPro" id="IPR036010">
    <property type="entry name" value="2Fe-2S_ferredoxin-like_sf"/>
</dbReference>
<dbReference type="InterPro" id="IPR001041">
    <property type="entry name" value="2Fe-2S_ferredoxin-type"/>
</dbReference>
<dbReference type="InterPro" id="IPR006058">
    <property type="entry name" value="2Fe2S_fd_BS"/>
</dbReference>
<dbReference type="InterPro" id="IPR017896">
    <property type="entry name" value="4Fe4S_Fe-S-bd"/>
</dbReference>
<dbReference type="InterPro" id="IPR017900">
    <property type="entry name" value="4Fe4S_Fe_S_CS"/>
</dbReference>
<dbReference type="InterPro" id="IPR012675">
    <property type="entry name" value="Beta-grasp_dom_sf"/>
</dbReference>
<dbReference type="InterPro" id="IPR009051">
    <property type="entry name" value="Helical_ferredxn"/>
</dbReference>
<dbReference type="InterPro" id="IPR050573">
    <property type="entry name" value="SDH/FRD_Iron-Sulfur"/>
</dbReference>
<dbReference type="InterPro" id="IPR004489">
    <property type="entry name" value="Succ_DH/fum_Rdtase_Fe-S"/>
</dbReference>
<dbReference type="InterPro" id="IPR025192">
    <property type="entry name" value="Succ_DH/fum_Rdtase_N"/>
</dbReference>
<dbReference type="NCBIfam" id="TIGR00384">
    <property type="entry name" value="dhsB"/>
    <property type="match status" value="1"/>
</dbReference>
<dbReference type="NCBIfam" id="NF004616">
    <property type="entry name" value="PRK05950.1"/>
    <property type="match status" value="1"/>
</dbReference>
<dbReference type="PANTHER" id="PTHR11921:SF29">
    <property type="entry name" value="SUCCINATE DEHYDROGENASE [UBIQUINONE] IRON-SULFUR SUBUNIT, MITOCHONDRIAL"/>
    <property type="match status" value="1"/>
</dbReference>
<dbReference type="PANTHER" id="PTHR11921">
    <property type="entry name" value="SUCCINATE DEHYDROGENASE IRON-SULFUR PROTEIN"/>
    <property type="match status" value="1"/>
</dbReference>
<dbReference type="Pfam" id="PF13085">
    <property type="entry name" value="Fer2_3"/>
    <property type="match status" value="1"/>
</dbReference>
<dbReference type="Pfam" id="PF13534">
    <property type="entry name" value="Fer4_17"/>
    <property type="match status" value="1"/>
</dbReference>
<dbReference type="SUPFAM" id="SSF54292">
    <property type="entry name" value="2Fe-2S ferredoxin-like"/>
    <property type="match status" value="1"/>
</dbReference>
<dbReference type="SUPFAM" id="SSF46548">
    <property type="entry name" value="alpha-helical ferredoxin"/>
    <property type="match status" value="1"/>
</dbReference>
<dbReference type="PROSITE" id="PS00197">
    <property type="entry name" value="2FE2S_FER_1"/>
    <property type="match status" value="1"/>
</dbReference>
<dbReference type="PROSITE" id="PS51085">
    <property type="entry name" value="2FE2S_FER_2"/>
    <property type="match status" value="1"/>
</dbReference>
<dbReference type="PROSITE" id="PS00198">
    <property type="entry name" value="4FE4S_FER_1"/>
    <property type="match status" value="1"/>
</dbReference>
<dbReference type="PROSITE" id="PS51379">
    <property type="entry name" value="4FE4S_FER_2"/>
    <property type="match status" value="1"/>
</dbReference>
<proteinExistence type="inferred from homology"/>